<evidence type="ECO:0000255" key="1">
    <source>
        <dbReference type="HAMAP-Rule" id="MF_01932"/>
    </source>
</evidence>
<gene>
    <name evidence="1" type="primary">amn</name>
    <name type="ordered locus">Z3139</name>
    <name type="ordered locus">ECs2779</name>
</gene>
<reference key="1">
    <citation type="journal article" date="2001" name="Nature">
        <title>Genome sequence of enterohaemorrhagic Escherichia coli O157:H7.</title>
        <authorList>
            <person name="Perna N.T."/>
            <person name="Plunkett G. III"/>
            <person name="Burland V."/>
            <person name="Mau B."/>
            <person name="Glasner J.D."/>
            <person name="Rose D.J."/>
            <person name="Mayhew G.F."/>
            <person name="Evans P.S."/>
            <person name="Gregor J."/>
            <person name="Kirkpatrick H.A."/>
            <person name="Posfai G."/>
            <person name="Hackett J."/>
            <person name="Klink S."/>
            <person name="Boutin A."/>
            <person name="Shao Y."/>
            <person name="Miller L."/>
            <person name="Grotbeck E.J."/>
            <person name="Davis N.W."/>
            <person name="Lim A."/>
            <person name="Dimalanta E.T."/>
            <person name="Potamousis K."/>
            <person name="Apodaca J."/>
            <person name="Anantharaman T.S."/>
            <person name="Lin J."/>
            <person name="Yen G."/>
            <person name="Schwartz D.C."/>
            <person name="Welch R.A."/>
            <person name="Blattner F.R."/>
        </authorList>
    </citation>
    <scope>NUCLEOTIDE SEQUENCE [LARGE SCALE GENOMIC DNA]</scope>
    <source>
        <strain>O157:H7 / EDL933 / ATCC 700927 / EHEC</strain>
    </source>
</reference>
<reference key="2">
    <citation type="journal article" date="2001" name="DNA Res.">
        <title>Complete genome sequence of enterohemorrhagic Escherichia coli O157:H7 and genomic comparison with a laboratory strain K-12.</title>
        <authorList>
            <person name="Hayashi T."/>
            <person name="Makino K."/>
            <person name="Ohnishi M."/>
            <person name="Kurokawa K."/>
            <person name="Ishii K."/>
            <person name="Yokoyama K."/>
            <person name="Han C.-G."/>
            <person name="Ohtsubo E."/>
            <person name="Nakayama K."/>
            <person name="Murata T."/>
            <person name="Tanaka M."/>
            <person name="Tobe T."/>
            <person name="Iida T."/>
            <person name="Takami H."/>
            <person name="Honda T."/>
            <person name="Sasakawa C."/>
            <person name="Ogasawara N."/>
            <person name="Yasunaga T."/>
            <person name="Kuhara S."/>
            <person name="Shiba T."/>
            <person name="Hattori M."/>
            <person name="Shinagawa H."/>
        </authorList>
    </citation>
    <scope>NUCLEOTIDE SEQUENCE [LARGE SCALE GENOMIC DNA]</scope>
    <source>
        <strain>O157:H7 / Sakai / RIMD 0509952 / EHEC</strain>
    </source>
</reference>
<protein>
    <recommendedName>
        <fullName evidence="1">AMP nucleosidase</fullName>
        <ecNumber evidence="1">3.2.2.4</ecNumber>
    </recommendedName>
</protein>
<comment type="function">
    <text evidence="1">Catalyzes the hydrolysis of the N-glycosidic bond of AMP to form adenine and ribose 5-phosphate. Involved in regulation of AMP concentrations.</text>
</comment>
<comment type="catalytic activity">
    <reaction evidence="1">
        <text>AMP + H2O = adenine + D-ribose 5-phosphate</text>
        <dbReference type="Rhea" id="RHEA:20129"/>
        <dbReference type="ChEBI" id="CHEBI:15377"/>
        <dbReference type="ChEBI" id="CHEBI:16708"/>
        <dbReference type="ChEBI" id="CHEBI:78346"/>
        <dbReference type="ChEBI" id="CHEBI:456215"/>
        <dbReference type="EC" id="3.2.2.4"/>
    </reaction>
</comment>
<comment type="similarity">
    <text evidence="1">Belongs to the AMP nucleosidase family.</text>
</comment>
<accession>P0AE13</accession>
<accession>P15272</accession>
<accession>P78074</accession>
<keyword id="KW-0378">Hydrolase</keyword>
<keyword id="KW-1185">Reference proteome</keyword>
<name>AMN_ECO57</name>
<feature type="chain" id="PRO_0000064587" description="AMP nucleosidase">
    <location>
        <begin position="1"/>
        <end position="484"/>
    </location>
</feature>
<sequence>MNNKGSGLTPAQALDKLDALYEQSVVALRNAIGNYITSGELPDENARKQGLFVYPSLTVTWDGSTTNPPKTRAFGRFTHAGSYTTTITRPTLFRSYLNEQLTLLYQDYGAHISVQPSQHEIPYPYVIDGSELTLDRSMSAGLTRYFPTTELAQIGDETADGIYHPTEFSPLSHFDARRVDFSLARLRHYTGTPVEHFQPFVLFTNYTRYVDEFVRWGCSQILDPDSPYIALSCAGGNWITAETEAPEEAISDLAWKKHQMPAWHLITADGQGITLVNIGVGPSNAKTICDHLAVLRPDVWLMIGHCGGLRESQAIGDYVLAHAYLRDDHVLDAVLPPDIPIPSIAEVQRALYDATKLVSGRPGEEVKQRLRTGTVVTTDDRNWELRYSASALRFNLSRAVAIDMESATIAAQGYRFRVPYGTLLCVSDKPLHGEIKLPGQANRFYEGAISEHLQIGIRAIDLLRAEGDRLHSRKLRTFNEPPFR</sequence>
<organism>
    <name type="scientific">Escherichia coli O157:H7</name>
    <dbReference type="NCBI Taxonomy" id="83334"/>
    <lineage>
        <taxon>Bacteria</taxon>
        <taxon>Pseudomonadati</taxon>
        <taxon>Pseudomonadota</taxon>
        <taxon>Gammaproteobacteria</taxon>
        <taxon>Enterobacterales</taxon>
        <taxon>Enterobacteriaceae</taxon>
        <taxon>Escherichia</taxon>
    </lineage>
</organism>
<proteinExistence type="inferred from homology"/>
<dbReference type="EC" id="3.2.2.4" evidence="1"/>
<dbReference type="EMBL" id="AE005174">
    <property type="protein sequence ID" value="AAG57045.1"/>
    <property type="molecule type" value="Genomic_DNA"/>
</dbReference>
<dbReference type="EMBL" id="BA000007">
    <property type="protein sequence ID" value="BAB36202.1"/>
    <property type="molecule type" value="Genomic_DNA"/>
</dbReference>
<dbReference type="PIR" id="A85823">
    <property type="entry name" value="A85823"/>
</dbReference>
<dbReference type="PIR" id="C90976">
    <property type="entry name" value="C90976"/>
</dbReference>
<dbReference type="RefSeq" id="NP_310806.1">
    <property type="nucleotide sequence ID" value="NC_002695.1"/>
</dbReference>
<dbReference type="RefSeq" id="WP_001060244.1">
    <property type="nucleotide sequence ID" value="NZ_VOAI01000052.1"/>
</dbReference>
<dbReference type="SMR" id="P0AE13"/>
<dbReference type="STRING" id="155864.Z3139"/>
<dbReference type="GeneID" id="75202785"/>
<dbReference type="GeneID" id="912716"/>
<dbReference type="KEGG" id="ece:Z3139"/>
<dbReference type="KEGG" id="ecs:ECs_2779"/>
<dbReference type="PATRIC" id="fig|386585.9.peg.2911"/>
<dbReference type="eggNOG" id="COG0775">
    <property type="taxonomic scope" value="Bacteria"/>
</dbReference>
<dbReference type="HOGENOM" id="CLU_026838_1_0_6"/>
<dbReference type="OMA" id="RPHAWIM"/>
<dbReference type="Proteomes" id="UP000000558">
    <property type="component" value="Chromosome"/>
</dbReference>
<dbReference type="Proteomes" id="UP000002519">
    <property type="component" value="Chromosome"/>
</dbReference>
<dbReference type="GO" id="GO:0005829">
    <property type="term" value="C:cytosol"/>
    <property type="evidence" value="ECO:0007669"/>
    <property type="project" value="TreeGrafter"/>
</dbReference>
<dbReference type="GO" id="GO:0008714">
    <property type="term" value="F:AMP nucleosidase activity"/>
    <property type="evidence" value="ECO:0007669"/>
    <property type="project" value="UniProtKB-UniRule"/>
</dbReference>
<dbReference type="GO" id="GO:0044209">
    <property type="term" value="P:AMP salvage"/>
    <property type="evidence" value="ECO:0007669"/>
    <property type="project" value="InterPro"/>
</dbReference>
<dbReference type="GO" id="GO:0009116">
    <property type="term" value="P:nucleoside metabolic process"/>
    <property type="evidence" value="ECO:0007669"/>
    <property type="project" value="InterPro"/>
</dbReference>
<dbReference type="CDD" id="cd17762">
    <property type="entry name" value="AMN"/>
    <property type="match status" value="1"/>
</dbReference>
<dbReference type="FunFam" id="3.40.50.1580:FF:000005">
    <property type="entry name" value="AMP nucleosidase"/>
    <property type="match status" value="1"/>
</dbReference>
<dbReference type="Gene3D" id="3.30.1730.10">
    <property type="entry name" value="AMP nucleoside phosphorylase, N-terminal domain"/>
    <property type="match status" value="1"/>
</dbReference>
<dbReference type="Gene3D" id="3.40.50.1580">
    <property type="entry name" value="Nucleoside phosphorylase domain"/>
    <property type="match status" value="1"/>
</dbReference>
<dbReference type="HAMAP" id="MF_01932">
    <property type="entry name" value="AMP_nucleosidase"/>
    <property type="match status" value="1"/>
</dbReference>
<dbReference type="InterPro" id="IPR047039">
    <property type="entry name" value="AMN_phosphorylase"/>
</dbReference>
<dbReference type="InterPro" id="IPR037109">
    <property type="entry name" value="AMP_N_sf"/>
</dbReference>
<dbReference type="InterPro" id="IPR011271">
    <property type="entry name" value="AMP_nucleosidase"/>
</dbReference>
<dbReference type="InterPro" id="IPR018953">
    <property type="entry name" value="AMP_nucleoside_Pase_N"/>
</dbReference>
<dbReference type="InterPro" id="IPR000845">
    <property type="entry name" value="Nucleoside_phosphorylase_d"/>
</dbReference>
<dbReference type="InterPro" id="IPR035994">
    <property type="entry name" value="Nucleoside_phosphorylase_sf"/>
</dbReference>
<dbReference type="NCBIfam" id="TIGR01717">
    <property type="entry name" value="AMP-nucleosdse"/>
    <property type="match status" value="1"/>
</dbReference>
<dbReference type="NCBIfam" id="NF006142">
    <property type="entry name" value="PRK08292.1"/>
    <property type="match status" value="1"/>
</dbReference>
<dbReference type="PANTHER" id="PTHR43691:SF6">
    <property type="entry name" value="AMP NUCLEOSIDASE"/>
    <property type="match status" value="1"/>
</dbReference>
<dbReference type="PANTHER" id="PTHR43691">
    <property type="entry name" value="URIDINE PHOSPHORYLASE"/>
    <property type="match status" value="1"/>
</dbReference>
<dbReference type="Pfam" id="PF10423">
    <property type="entry name" value="AMNp_N"/>
    <property type="match status" value="1"/>
</dbReference>
<dbReference type="Pfam" id="PF01048">
    <property type="entry name" value="PNP_UDP_1"/>
    <property type="match status" value="1"/>
</dbReference>
<dbReference type="SUPFAM" id="SSF53167">
    <property type="entry name" value="Purine and uridine phosphorylases"/>
    <property type="match status" value="1"/>
</dbReference>